<geneLocation type="chloroplast"/>
<dbReference type="EMBL" id="AF494278">
    <property type="protein sequence ID" value="AAM96549.1"/>
    <property type="molecule type" value="Genomic_DNA"/>
</dbReference>
<dbReference type="RefSeq" id="NP_683771.1">
    <property type="nucleotide sequence ID" value="NC_004115.1"/>
</dbReference>
<dbReference type="SMR" id="Q8MA15"/>
<dbReference type="GeneID" id="860705"/>
<dbReference type="GO" id="GO:0009535">
    <property type="term" value="C:chloroplast thylakoid membrane"/>
    <property type="evidence" value="ECO:0007669"/>
    <property type="project" value="UniProtKB-SubCell"/>
</dbReference>
<dbReference type="GO" id="GO:0009523">
    <property type="term" value="C:photosystem II"/>
    <property type="evidence" value="ECO:0007669"/>
    <property type="project" value="UniProtKB-KW"/>
</dbReference>
<dbReference type="GO" id="GO:0019684">
    <property type="term" value="P:photosynthesis, light reaction"/>
    <property type="evidence" value="ECO:0007669"/>
    <property type="project" value="InterPro"/>
</dbReference>
<dbReference type="HAMAP" id="MF_00438">
    <property type="entry name" value="PSII_PsbM"/>
    <property type="match status" value="1"/>
</dbReference>
<dbReference type="InterPro" id="IPR007826">
    <property type="entry name" value="PSII_PsbM"/>
</dbReference>
<dbReference type="InterPro" id="IPR037269">
    <property type="entry name" value="PSII_PsbM_sf"/>
</dbReference>
<dbReference type="NCBIfam" id="TIGR03038">
    <property type="entry name" value="PS_II_psbM"/>
    <property type="match status" value="1"/>
</dbReference>
<dbReference type="PANTHER" id="PTHR35774">
    <property type="entry name" value="PHOTOSYSTEM II REACTION CENTER PROTEIN M"/>
    <property type="match status" value="1"/>
</dbReference>
<dbReference type="PANTHER" id="PTHR35774:SF1">
    <property type="entry name" value="PHOTOSYSTEM II REACTION CENTER PROTEIN M"/>
    <property type="match status" value="1"/>
</dbReference>
<dbReference type="Pfam" id="PF05151">
    <property type="entry name" value="PsbM"/>
    <property type="match status" value="1"/>
</dbReference>
<dbReference type="SUPFAM" id="SSF161033">
    <property type="entry name" value="Photosystem II reaction center protein M, PsbM"/>
    <property type="match status" value="1"/>
</dbReference>
<keyword id="KW-0150">Chloroplast</keyword>
<keyword id="KW-0472">Membrane</keyword>
<keyword id="KW-0602">Photosynthesis</keyword>
<keyword id="KW-0604">Photosystem II</keyword>
<keyword id="KW-0934">Plastid</keyword>
<keyword id="KW-0674">Reaction center</keyword>
<keyword id="KW-0793">Thylakoid</keyword>
<keyword id="KW-0812">Transmembrane</keyword>
<keyword id="KW-1133">Transmembrane helix</keyword>
<name>PSBM_CHAGL</name>
<evidence type="ECO:0000255" key="1">
    <source>
        <dbReference type="HAMAP-Rule" id="MF_00438"/>
    </source>
</evidence>
<protein>
    <recommendedName>
        <fullName evidence="1">Photosystem II reaction center protein M</fullName>
        <shortName evidence="1">PSII-M</shortName>
    </recommendedName>
</protein>
<gene>
    <name evidence="1" type="primary">psbM</name>
</gene>
<proteinExistence type="inferred from homology"/>
<reference key="1">
    <citation type="journal article" date="2002" name="Proc. Natl. Acad. Sci. U.S.A.">
        <title>The chloroplast and mitochondrial genome sequences of the charophyte Chaetosphaeridium globosum: insights into the timing of the events that restructured organelle DNAs within the green algal lineage that led to land plants.</title>
        <authorList>
            <person name="Turmel M."/>
            <person name="Otis C."/>
            <person name="Lemieux C."/>
        </authorList>
    </citation>
    <scope>NUCLEOTIDE SEQUENCE [LARGE SCALE GENOMIC DNA]</scope>
    <source>
        <strain>M1311</strain>
    </source>
</reference>
<organism>
    <name type="scientific">Chaetosphaeridium globosum</name>
    <name type="common">Charophycean green alga</name>
    <name type="synonym">Herposteiron globosum</name>
    <dbReference type="NCBI Taxonomy" id="96477"/>
    <lineage>
        <taxon>Eukaryota</taxon>
        <taxon>Viridiplantae</taxon>
        <taxon>Streptophyta</taxon>
        <taxon>Coleochaetophyceae</taxon>
        <taxon>Coleochaetales</taxon>
        <taxon>Chaetosphaeridiaceae</taxon>
        <taxon>Chaetosphaeridium</taxon>
    </lineage>
</organism>
<feature type="chain" id="PRO_0000217552" description="Photosystem II reaction center protein M">
    <location>
        <begin position="1"/>
        <end position="34"/>
    </location>
</feature>
<feature type="transmembrane region" description="Helical" evidence="1">
    <location>
        <begin position="5"/>
        <end position="25"/>
    </location>
</feature>
<comment type="function">
    <text evidence="1">One of the components of the core complex of photosystem II (PSII). PSII is a light-driven water:plastoquinone oxidoreductase that uses light energy to abstract electrons from H(2)O, generating O(2) and a proton gradient subsequently used for ATP formation. It consists of a core antenna complex that captures photons, and an electron transfer chain that converts photonic excitation into a charge separation. This subunit is found at the monomer-monomer interface.</text>
</comment>
<comment type="subunit">
    <text evidence="1">PSII is composed of 1 copy each of membrane proteins PsbA, PsbB, PsbC, PsbD, PsbE, PsbF, PsbH, PsbI, PsbJ, PsbK, PsbL, PsbM, PsbT, PsbX, PsbY, PsbZ, Psb30/Ycf12, at least 3 peripheral proteins of the oxygen-evolving complex and a large number of cofactors. It forms dimeric complexes.</text>
</comment>
<comment type="subcellular location">
    <subcellularLocation>
        <location evidence="1">Plastid</location>
        <location evidence="1">Chloroplast thylakoid membrane</location>
        <topology evidence="1">Single-pass membrane protein</topology>
    </subcellularLocation>
</comment>
<comment type="similarity">
    <text evidence="1">Belongs to the PsbM family.</text>
</comment>
<accession>Q8MA15</accession>
<sequence>MEVNILAVIATALFVLIPTAFLLILYVKTESAGS</sequence>